<organism>
    <name type="scientific">Escherichia coli (strain B / BL21-DE3)</name>
    <dbReference type="NCBI Taxonomy" id="469008"/>
    <lineage>
        <taxon>Bacteria</taxon>
        <taxon>Pseudomonadati</taxon>
        <taxon>Pseudomonadota</taxon>
        <taxon>Gammaproteobacteria</taxon>
        <taxon>Enterobacterales</taxon>
        <taxon>Enterobacteriaceae</taxon>
        <taxon>Escherichia</taxon>
    </lineage>
</organism>
<keyword id="KW-0004">4Fe-4S</keyword>
<keyword id="KW-0028">Amino-acid biosynthesis</keyword>
<keyword id="KW-0198">Cysteine biosynthesis</keyword>
<keyword id="KW-0349">Heme</keyword>
<keyword id="KW-0408">Iron</keyword>
<keyword id="KW-0411">Iron-sulfur</keyword>
<keyword id="KW-0479">Metal-binding</keyword>
<keyword id="KW-0521">NADP</keyword>
<keyword id="KW-0560">Oxidoreductase</keyword>
<sequence>MSEKHPGPLVVEGKLTDAERMKLESNYLRGTIAEDLNDGLTGGFKGDNFLLIRFHGMYQQDDRDIRAERAEQKLEPRHAMLLRCRLPGGVITTKQWQAIDKFAGENTIYGSIRLTNRQTFQFHGILKKNVKPVHQMLHSVGLDALATANDMNRNVLCTSNPYESQLHAEAYEWAKKISEHLLPRTRAYAEIWLDQEKVATTDEEPILGQTYLPRKFKTTVVIPPQNDIDLHANDMNFVAIAENGKLVGFNLLVGGGLSIEHGNKKTYARTASEFGYLPLEHTLAVAEAVVTTQRDWGNRTDRKNAKTKYTLERVGVETFKAEVERRAGIKFEPIRPYEFTGRGDRIGWVKGIDDNWHLTLFIENGRILDYPARPLKTGLLEIAKIHKGDFRITANQNLIIAGVPESEKAKIEKIAKESGLMNAVTPQRENSMACVSFPTCPLAMAEAERFLPSFIDNIDNLMAKHGVSDEHIVMRVTGCPNGCGRAMLAEVGLVGKAPGRYNLHLGGNRIGTRIPRMYKENITEPEILASLDELIGRWAKEREAGEGFGDFTVRAGIIRPVLDPARDLWD</sequence>
<reference key="1">
    <citation type="submission" date="2009-06" db="EMBL/GenBank/DDBJ databases">
        <title>Sequencing and gene expression analysis of Escherichia coli BL21.</title>
        <authorList>
            <person name="Leparc G."/>
            <person name="Striedner G."/>
            <person name="Bayer K."/>
            <person name="Kreil D."/>
            <person name="Krempl P.M."/>
        </authorList>
    </citation>
    <scope>NUCLEOTIDE SEQUENCE [LARGE SCALE GENOMIC DNA]</scope>
    <source>
        <strain>B / BL21-DE3</strain>
    </source>
</reference>
<reference key="2">
    <citation type="submission" date="2009-07" db="EMBL/GenBank/DDBJ databases">
        <title>Complete sequence of Escherichia coli BL21(DE3).</title>
        <authorList>
            <person name="Lucas S."/>
            <person name="Copeland A."/>
            <person name="Lapidus A."/>
            <person name="Glavina del Rio T."/>
            <person name="Dalin E."/>
            <person name="Tice H."/>
            <person name="Bruce D."/>
            <person name="Goodwin L."/>
            <person name="Pitluck S."/>
            <person name="LaButti K.M."/>
            <person name="Clum A."/>
            <person name="Larimer F."/>
            <person name="Land M."/>
            <person name="Hauser L."/>
            <person name="Kyrpides N."/>
            <person name="Anderson I."/>
            <person name="Sorek R."/>
            <person name="Rubin E."/>
        </authorList>
    </citation>
    <scope>NUCLEOTIDE SEQUENCE [LARGE SCALE GENOMIC DNA]</scope>
    <source>
        <strain>B / BL21-DE3</strain>
    </source>
</reference>
<reference key="3">
    <citation type="journal article" date="2009" name="J. Mol. Biol.">
        <title>Genome sequences of Escherichia coli B strains REL606 and BL21(DE3).</title>
        <authorList>
            <person name="Jeong H."/>
            <person name="Barbe V."/>
            <person name="Lee C.H."/>
            <person name="Vallenet D."/>
            <person name="Yu D.S."/>
            <person name="Choi S.H."/>
            <person name="Couloux A."/>
            <person name="Lee S.W."/>
            <person name="Yoon S.H."/>
            <person name="Cattolico L."/>
            <person name="Hur C.G."/>
            <person name="Park H.S."/>
            <person name="Segurens B."/>
            <person name="Kim S.C."/>
            <person name="Oh T.K."/>
            <person name="Lenski R.E."/>
            <person name="Studier F.W."/>
            <person name="Daegelen P."/>
            <person name="Kim J.F."/>
        </authorList>
    </citation>
    <scope>NUCLEOTIDE SEQUENCE [LARGE SCALE GENOMIC DNA]</scope>
    <source>
        <strain>B / BL21-DE3</strain>
    </source>
</reference>
<accession>C5W865</accession>
<accession>C6EJA9</accession>
<dbReference type="EC" id="1.8.1.2" evidence="1"/>
<dbReference type="EMBL" id="AM946981">
    <property type="protein sequence ID" value="CAQ33088.1"/>
    <property type="molecule type" value="Genomic_DNA"/>
</dbReference>
<dbReference type="EMBL" id="CP001665">
    <property type="protein sequence ID" value="ACT28032.1"/>
    <property type="molecule type" value="Genomic_DNA"/>
</dbReference>
<dbReference type="EMBL" id="CP001509">
    <property type="protein sequence ID" value="ACT44425.1"/>
    <property type="molecule type" value="Genomic_DNA"/>
</dbReference>
<dbReference type="RefSeq" id="WP_001290699.1">
    <property type="nucleotide sequence ID" value="NZ_JADXDS010000032.1"/>
</dbReference>
<dbReference type="SMR" id="C5W865"/>
<dbReference type="KEGG" id="ebd:ECBD_0966"/>
<dbReference type="KEGG" id="ebe:B21_02571"/>
<dbReference type="KEGG" id="ebl:ECD_02608"/>
<dbReference type="PATRIC" id="fig|469008.15.peg.2639"/>
<dbReference type="eggNOG" id="COG0155">
    <property type="taxonomic scope" value="Bacteria"/>
</dbReference>
<dbReference type="HOGENOM" id="CLU_001975_3_2_6"/>
<dbReference type="UniPathway" id="UPA00140">
    <property type="reaction ID" value="UER00207"/>
</dbReference>
<dbReference type="GO" id="GO:0009337">
    <property type="term" value="C:sulfite reductase complex (NADPH)"/>
    <property type="evidence" value="ECO:0007669"/>
    <property type="project" value="InterPro"/>
</dbReference>
<dbReference type="GO" id="GO:0051539">
    <property type="term" value="F:4 iron, 4 sulfur cluster binding"/>
    <property type="evidence" value="ECO:0007669"/>
    <property type="project" value="UniProtKB-KW"/>
</dbReference>
<dbReference type="GO" id="GO:0020037">
    <property type="term" value="F:heme binding"/>
    <property type="evidence" value="ECO:0007669"/>
    <property type="project" value="InterPro"/>
</dbReference>
<dbReference type="GO" id="GO:0046872">
    <property type="term" value="F:metal ion binding"/>
    <property type="evidence" value="ECO:0007669"/>
    <property type="project" value="UniProtKB-KW"/>
</dbReference>
<dbReference type="GO" id="GO:0050661">
    <property type="term" value="F:NADP binding"/>
    <property type="evidence" value="ECO:0007669"/>
    <property type="project" value="InterPro"/>
</dbReference>
<dbReference type="GO" id="GO:0050311">
    <property type="term" value="F:sulfite reductase (ferredoxin) activity"/>
    <property type="evidence" value="ECO:0007669"/>
    <property type="project" value="TreeGrafter"/>
</dbReference>
<dbReference type="GO" id="GO:0004783">
    <property type="term" value="F:sulfite reductase (NADPH) activity"/>
    <property type="evidence" value="ECO:0007669"/>
    <property type="project" value="UniProtKB-UniRule"/>
</dbReference>
<dbReference type="GO" id="GO:0019344">
    <property type="term" value="P:cysteine biosynthetic process"/>
    <property type="evidence" value="ECO:0007669"/>
    <property type="project" value="UniProtKB-KW"/>
</dbReference>
<dbReference type="GO" id="GO:0070814">
    <property type="term" value="P:hydrogen sulfide biosynthetic process"/>
    <property type="evidence" value="ECO:0007669"/>
    <property type="project" value="UniProtKB-UniRule"/>
</dbReference>
<dbReference type="GO" id="GO:0000103">
    <property type="term" value="P:sulfate assimilation"/>
    <property type="evidence" value="ECO:0007669"/>
    <property type="project" value="UniProtKB-UniRule"/>
</dbReference>
<dbReference type="FunFam" id="3.30.413.10:FF:000003">
    <property type="entry name" value="Sulfite reductase [NADPH] hemoprotein beta-component"/>
    <property type="match status" value="1"/>
</dbReference>
<dbReference type="FunFam" id="3.30.413.10:FF:000004">
    <property type="entry name" value="Sulfite reductase [NADPH] hemoprotein beta-component"/>
    <property type="match status" value="1"/>
</dbReference>
<dbReference type="Gene3D" id="3.30.413.10">
    <property type="entry name" value="Sulfite Reductase Hemoprotein, domain 1"/>
    <property type="match status" value="2"/>
</dbReference>
<dbReference type="HAMAP" id="MF_01540">
    <property type="entry name" value="CysI"/>
    <property type="match status" value="1"/>
</dbReference>
<dbReference type="InterPro" id="IPR011786">
    <property type="entry name" value="CysI"/>
</dbReference>
<dbReference type="InterPro" id="IPR005117">
    <property type="entry name" value="NiRdtase/SiRdtase_haem-b_fer"/>
</dbReference>
<dbReference type="InterPro" id="IPR036136">
    <property type="entry name" value="Nit/Sulf_reduc_fer-like_dom_sf"/>
</dbReference>
<dbReference type="InterPro" id="IPR006067">
    <property type="entry name" value="NO2/SO3_Rdtase_4Fe4S_dom"/>
</dbReference>
<dbReference type="InterPro" id="IPR045169">
    <property type="entry name" value="NO2/SO3_Rdtase_4Fe4S_prot"/>
</dbReference>
<dbReference type="InterPro" id="IPR045854">
    <property type="entry name" value="NO2/SO3_Rdtase_4Fe4S_sf"/>
</dbReference>
<dbReference type="InterPro" id="IPR006066">
    <property type="entry name" value="NO2/SO3_Rdtase_FeS/sirohaem_BS"/>
</dbReference>
<dbReference type="NCBIfam" id="TIGR02041">
    <property type="entry name" value="CysI"/>
    <property type="match status" value="1"/>
</dbReference>
<dbReference type="NCBIfam" id="NF010029">
    <property type="entry name" value="PRK13504.1"/>
    <property type="match status" value="1"/>
</dbReference>
<dbReference type="PANTHER" id="PTHR11493:SF47">
    <property type="entry name" value="SULFITE REDUCTASE [NADPH] SUBUNIT BETA"/>
    <property type="match status" value="1"/>
</dbReference>
<dbReference type="PANTHER" id="PTHR11493">
    <property type="entry name" value="SULFITE REDUCTASE [NADPH] SUBUNIT BETA-RELATED"/>
    <property type="match status" value="1"/>
</dbReference>
<dbReference type="Pfam" id="PF01077">
    <property type="entry name" value="NIR_SIR"/>
    <property type="match status" value="1"/>
</dbReference>
<dbReference type="Pfam" id="PF03460">
    <property type="entry name" value="NIR_SIR_ferr"/>
    <property type="match status" value="2"/>
</dbReference>
<dbReference type="PRINTS" id="PR00397">
    <property type="entry name" value="SIROHAEM"/>
</dbReference>
<dbReference type="SUPFAM" id="SSF56014">
    <property type="entry name" value="Nitrite and sulphite reductase 4Fe-4S domain-like"/>
    <property type="match status" value="2"/>
</dbReference>
<dbReference type="SUPFAM" id="SSF55124">
    <property type="entry name" value="Nitrite/Sulfite reductase N-terminal domain-like"/>
    <property type="match status" value="2"/>
</dbReference>
<dbReference type="PROSITE" id="PS00365">
    <property type="entry name" value="NIR_SIR"/>
    <property type="match status" value="1"/>
</dbReference>
<name>CYSI_ECOBD</name>
<feature type="chain" id="PRO_0000388485" description="Sulfite reductase [NADPH] hemoprotein beta-component">
    <location>
        <begin position="1"/>
        <end position="570"/>
    </location>
</feature>
<feature type="binding site" evidence="1">
    <location>
        <position position="434"/>
    </location>
    <ligand>
        <name>[4Fe-4S] cluster</name>
        <dbReference type="ChEBI" id="CHEBI:49883"/>
    </ligand>
</feature>
<feature type="binding site" evidence="1">
    <location>
        <position position="440"/>
    </location>
    <ligand>
        <name>[4Fe-4S] cluster</name>
        <dbReference type="ChEBI" id="CHEBI:49883"/>
    </ligand>
</feature>
<feature type="binding site" evidence="1">
    <location>
        <position position="479"/>
    </location>
    <ligand>
        <name>[4Fe-4S] cluster</name>
        <dbReference type="ChEBI" id="CHEBI:49883"/>
    </ligand>
</feature>
<feature type="binding site" evidence="1">
    <location>
        <position position="483"/>
    </location>
    <ligand>
        <name>[4Fe-4S] cluster</name>
        <dbReference type="ChEBI" id="CHEBI:49883"/>
    </ligand>
</feature>
<feature type="binding site" description="axial binding residue" evidence="1">
    <location>
        <position position="483"/>
    </location>
    <ligand>
        <name>siroheme</name>
        <dbReference type="ChEBI" id="CHEBI:60052"/>
    </ligand>
    <ligandPart>
        <name>Fe</name>
        <dbReference type="ChEBI" id="CHEBI:18248"/>
    </ligandPart>
</feature>
<proteinExistence type="inferred from homology"/>
<gene>
    <name evidence="1" type="primary">cysI</name>
    <name type="ordered locus">ECBD_0966</name>
    <name type="ordered locus">ECD_02608</name>
    <name type="ordered locus">B21_02571</name>
</gene>
<evidence type="ECO:0000255" key="1">
    <source>
        <dbReference type="HAMAP-Rule" id="MF_01540"/>
    </source>
</evidence>
<protein>
    <recommendedName>
        <fullName evidence="1">Sulfite reductase [NADPH] hemoprotein beta-component</fullName>
        <shortName evidence="1">SiR-HP</shortName>
        <shortName evidence="1">SiRHP</shortName>
        <ecNumber evidence="1">1.8.1.2</ecNumber>
    </recommendedName>
</protein>
<comment type="function">
    <text evidence="1">Component of the sulfite reductase complex that catalyzes the 6-electron reduction of sulfite to sulfide. This is one of several activities required for the biosynthesis of L-cysteine from sulfate.</text>
</comment>
<comment type="catalytic activity">
    <reaction evidence="1">
        <text>hydrogen sulfide + 3 NADP(+) + 3 H2O = sulfite + 3 NADPH + 4 H(+)</text>
        <dbReference type="Rhea" id="RHEA:13801"/>
        <dbReference type="ChEBI" id="CHEBI:15377"/>
        <dbReference type="ChEBI" id="CHEBI:15378"/>
        <dbReference type="ChEBI" id="CHEBI:17359"/>
        <dbReference type="ChEBI" id="CHEBI:29919"/>
        <dbReference type="ChEBI" id="CHEBI:57783"/>
        <dbReference type="ChEBI" id="CHEBI:58349"/>
        <dbReference type="EC" id="1.8.1.2"/>
    </reaction>
</comment>
<comment type="cofactor">
    <cofactor evidence="1">
        <name>siroheme</name>
        <dbReference type="ChEBI" id="CHEBI:60052"/>
    </cofactor>
    <text evidence="1">Binds 1 siroheme per subunit.</text>
</comment>
<comment type="cofactor">
    <cofactor evidence="1">
        <name>[4Fe-4S] cluster</name>
        <dbReference type="ChEBI" id="CHEBI:49883"/>
    </cofactor>
    <text evidence="1">Binds 1 [4Fe-4S] cluster per subunit.</text>
</comment>
<comment type="pathway">
    <text evidence="1">Sulfur metabolism; hydrogen sulfide biosynthesis; hydrogen sulfide from sulfite (NADPH route): step 1/1.</text>
</comment>
<comment type="subunit">
    <text evidence="1">Alpha(8)-beta(8). The alpha component is a flavoprotein, the beta component is a hemoprotein.</text>
</comment>
<comment type="similarity">
    <text evidence="1">Belongs to the nitrite and sulfite reductase 4Fe-4S domain family.</text>
</comment>